<gene>
    <name type="primary">RPL41</name>
</gene>
<organism>
    <name type="scientific">Hordeum vulgare</name>
    <name type="common">Barley</name>
    <dbReference type="NCBI Taxonomy" id="4513"/>
    <lineage>
        <taxon>Eukaryota</taxon>
        <taxon>Viridiplantae</taxon>
        <taxon>Streptophyta</taxon>
        <taxon>Embryophyta</taxon>
        <taxon>Tracheophyta</taxon>
        <taxon>Spermatophyta</taxon>
        <taxon>Magnoliopsida</taxon>
        <taxon>Liliopsida</taxon>
        <taxon>Poales</taxon>
        <taxon>Poaceae</taxon>
        <taxon>BOP clade</taxon>
        <taxon>Pooideae</taxon>
        <taxon>Triticodae</taxon>
        <taxon>Triticeae</taxon>
        <taxon>Hordeinae</taxon>
        <taxon>Hordeum</taxon>
    </lineage>
</organism>
<comment type="subunit">
    <text evidence="3">Component of the small ribosomal subunit (SSU) (Ref.2).</text>
</comment>
<comment type="miscellaneous">
    <text evidence="3">Initially thought to be part of the large ribosomal subunit. Crystal structures show eS32/eL41 to be a small ribosomal subunit forming a bridge at the interface of the 2 subunits.</text>
</comment>
<comment type="similarity">
    <text evidence="2">Belongs to the eukaryotic ribosomal protein eS32 family.</text>
</comment>
<sequence length="25" mass="3428">MRAKWKKKRMRRLKRKRRKMRQRSK</sequence>
<evidence type="ECO:0000256" key="1">
    <source>
        <dbReference type="SAM" id="MobiDB-lite"/>
    </source>
</evidence>
<evidence type="ECO:0000305" key="2"/>
<evidence type="ECO:0000305" key="3">
    <source ref="2"/>
</evidence>
<protein>
    <recommendedName>
        <fullName evidence="3">Small ribosomal subunit protein eS32</fullName>
    </recommendedName>
    <alternativeName>
        <fullName>60S ribosomal protein L41</fullName>
    </alternativeName>
    <alternativeName>
        <fullName evidence="2">Large ribosomal subunit protein eL41</fullName>
    </alternativeName>
</protein>
<dbReference type="EMBL" id="AJ001160">
    <property type="protein sequence ID" value="CAA04564.1"/>
    <property type="molecule type" value="mRNA"/>
</dbReference>
<dbReference type="PDB" id="8JIW">
    <property type="method" value="EM"/>
    <property type="resolution" value="2.88 A"/>
    <property type="chains" value="Cn=1-25"/>
</dbReference>
<dbReference type="PDBsum" id="8JIW"/>
<dbReference type="EMDB" id="EMD-36332"/>
<dbReference type="SMR" id="P62124"/>
<dbReference type="GO" id="GO:1990904">
    <property type="term" value="C:ribonucleoprotein complex"/>
    <property type="evidence" value="ECO:0007669"/>
    <property type="project" value="UniProtKB-KW"/>
</dbReference>
<dbReference type="GO" id="GO:0005840">
    <property type="term" value="C:ribosome"/>
    <property type="evidence" value="ECO:0007669"/>
    <property type="project" value="UniProtKB-KW"/>
</dbReference>
<dbReference type="GO" id="GO:0003735">
    <property type="term" value="F:structural constituent of ribosome"/>
    <property type="evidence" value="ECO:0007669"/>
    <property type="project" value="InterPro"/>
</dbReference>
<dbReference type="GO" id="GO:0006412">
    <property type="term" value="P:translation"/>
    <property type="evidence" value="ECO:0007669"/>
    <property type="project" value="InterPro"/>
</dbReference>
<dbReference type="InterPro" id="IPR007836">
    <property type="entry name" value="Ribosomal_eS32"/>
</dbReference>
<dbReference type="Pfam" id="PF05162">
    <property type="entry name" value="Ribosomal_L41"/>
    <property type="match status" value="1"/>
</dbReference>
<reference key="1">
    <citation type="submission" date="1997-12" db="EMBL/GenBank/DDBJ databases">
        <title>Barley L41 ribosomal protein from immature endosperm.</title>
        <authorList>
            <person name="Rasmussen S.K."/>
        </authorList>
    </citation>
    <scope>NUCLEOTIDE SEQUENCE [MRNA]</scope>
    <source>
        <strain>cv. Bomi</strain>
        <tissue>Endosperm</tissue>
    </source>
</reference>
<reference key="2">
    <citation type="unpublished observations" date="2023-10">
        <authorList>
            <person name="Leibundgut M.A."/>
            <person name="Ban N."/>
        </authorList>
    </citation>
    <scope>REVISION OF SUBUNIT</scope>
    <scope>NOMENCLATURE</scope>
</reference>
<proteinExistence type="evidence at protein level"/>
<feature type="chain" id="PRO_0000198065" description="Small ribosomal subunit protein eS32">
    <location>
        <begin position="1"/>
        <end position="25"/>
    </location>
</feature>
<feature type="region of interest" description="Disordered" evidence="1">
    <location>
        <begin position="1"/>
        <end position="25"/>
    </location>
</feature>
<keyword id="KW-0002">3D-structure</keyword>
<keyword id="KW-0687">Ribonucleoprotein</keyword>
<keyword id="KW-0689">Ribosomal protein</keyword>
<accession>P62124</accession>
<accession>P35015</accession>
<name>RS32_HORVU</name>